<organism>
    <name type="scientific">Homo sapiens</name>
    <name type="common">Human</name>
    <dbReference type="NCBI Taxonomy" id="9606"/>
    <lineage>
        <taxon>Eukaryota</taxon>
        <taxon>Metazoa</taxon>
        <taxon>Chordata</taxon>
        <taxon>Craniata</taxon>
        <taxon>Vertebrata</taxon>
        <taxon>Euteleostomi</taxon>
        <taxon>Mammalia</taxon>
        <taxon>Eutheria</taxon>
        <taxon>Euarchontoglires</taxon>
        <taxon>Primates</taxon>
        <taxon>Haplorrhini</taxon>
        <taxon>Catarrhini</taxon>
        <taxon>Hominidae</taxon>
        <taxon>Homo</taxon>
    </lineage>
</organism>
<sequence length="116" mass="12936">MKHLWFFLLLVAAPRWVLSQVQLQESGPGLVKPSETLSLTCTVSGGSISSYYWSWIRQPPGKGLEWIGYIYYSGSTNYNPSLKSRVTISVDTSKNQFSLKLSSVTAADTAVYYCAR</sequence>
<protein>
    <recommendedName>
        <fullName evidence="4 9">Immunoglobulin heavy variable 4-59</fullName>
    </recommendedName>
    <alternativeName>
        <fullName evidence="11">Ig heavy chain V-II region NEWM</fullName>
    </alternativeName>
</protein>
<dbReference type="EMBL" id="AC244452">
    <property type="status" value="NOT_ANNOTATED_CDS"/>
    <property type="molecule type" value="Genomic_DNA"/>
</dbReference>
<dbReference type="PIR" id="A90404">
    <property type="entry name" value="G1HUNM"/>
</dbReference>
<dbReference type="PDB" id="7CZP">
    <property type="method" value="EM"/>
    <property type="resolution" value="3.00 A"/>
    <property type="chains" value="H/J=24-116"/>
</dbReference>
<dbReference type="PDB" id="7CZX">
    <property type="method" value="EM"/>
    <property type="resolution" value="2.80 A"/>
    <property type="chains" value="H/I/J=50-115"/>
</dbReference>
<dbReference type="PDB" id="7FAB">
    <property type="method" value="X-ray"/>
    <property type="resolution" value="2.00 A"/>
    <property type="chains" value="H=21-116"/>
</dbReference>
<dbReference type="PDBsum" id="7CZP"/>
<dbReference type="PDBsum" id="7CZX"/>
<dbReference type="PDBsum" id="7FAB"/>
<dbReference type="EMDB" id="EMD-43544"/>
<dbReference type="EMDB" id="EMD-43559"/>
<dbReference type="SMR" id="P01825"/>
<dbReference type="FunCoup" id="P01825">
    <property type="interactions" value="411"/>
</dbReference>
<dbReference type="IMGT_GENE-DB" id="IGHV4-59"/>
<dbReference type="BioMuta" id="IGHV4-59"/>
<dbReference type="DMDM" id="123828"/>
<dbReference type="jPOST" id="P01825"/>
<dbReference type="MassIVE" id="P01825"/>
<dbReference type="Ensembl" id="ENST00000390629.3">
    <property type="protein sequence ID" value="ENSP00000375038.2"/>
    <property type="gene ID" value="ENSG00000224373.3"/>
</dbReference>
<dbReference type="Ensembl" id="ENST00000619078.2">
    <property type="protein sequence ID" value="ENSP00000484250.2"/>
    <property type="gene ID" value="ENSG00000282691.1"/>
</dbReference>
<dbReference type="AGR" id="HGNC:5654"/>
<dbReference type="GeneCards" id="IGHV4-59"/>
<dbReference type="HGNC" id="HGNC:5654">
    <property type="gene designation" value="IGHV4-59"/>
</dbReference>
<dbReference type="HPA" id="ENSG00000224373">
    <property type="expression patterns" value="Tissue enhanced (intestine, lymphoid tissue, urinary bladder)"/>
</dbReference>
<dbReference type="neXtProt" id="NX_P01825"/>
<dbReference type="OpenTargets" id="ENSG00000224373"/>
<dbReference type="VEuPathDB" id="HostDB:ENSG00000224373"/>
<dbReference type="GeneTree" id="ENSGT01030000234536"/>
<dbReference type="InParanoid" id="P01825"/>
<dbReference type="OMA" id="ISSDYWW"/>
<dbReference type="OrthoDB" id="9536275at2759"/>
<dbReference type="PAN-GO" id="P01825">
    <property type="GO annotations" value="11 GO annotations based on evolutionary models"/>
</dbReference>
<dbReference type="PathwayCommons" id="P01825"/>
<dbReference type="Reactome" id="R-HSA-166663">
    <property type="pathway name" value="Initial triggering of complement"/>
</dbReference>
<dbReference type="Reactome" id="R-HSA-173623">
    <property type="pathway name" value="Classical antibody-mediated complement activation"/>
</dbReference>
<dbReference type="Reactome" id="R-HSA-198933">
    <property type="pathway name" value="Immunoregulatory interactions between a Lymphoid and a non-Lymphoid cell"/>
</dbReference>
<dbReference type="Reactome" id="R-HSA-202733">
    <property type="pathway name" value="Cell surface interactions at the vascular wall"/>
</dbReference>
<dbReference type="Reactome" id="R-HSA-2029481">
    <property type="pathway name" value="FCGR activation"/>
</dbReference>
<dbReference type="Reactome" id="R-HSA-2029482">
    <property type="pathway name" value="Regulation of actin dynamics for phagocytic cup formation"/>
</dbReference>
<dbReference type="Reactome" id="R-HSA-2029485">
    <property type="pathway name" value="Role of phospholipids in phagocytosis"/>
</dbReference>
<dbReference type="Reactome" id="R-HSA-2168880">
    <property type="pathway name" value="Scavenging of heme from plasma"/>
</dbReference>
<dbReference type="Reactome" id="R-HSA-2454202">
    <property type="pathway name" value="Fc epsilon receptor (FCERI) signaling"/>
</dbReference>
<dbReference type="Reactome" id="R-HSA-2730905">
    <property type="pathway name" value="Role of LAT2/NTAL/LAB on calcium mobilization"/>
</dbReference>
<dbReference type="Reactome" id="R-HSA-2871796">
    <property type="pathway name" value="FCERI mediated MAPK activation"/>
</dbReference>
<dbReference type="Reactome" id="R-HSA-2871809">
    <property type="pathway name" value="FCERI mediated Ca+2 mobilization"/>
</dbReference>
<dbReference type="Reactome" id="R-HSA-2871837">
    <property type="pathway name" value="FCERI mediated NF-kB activation"/>
</dbReference>
<dbReference type="Reactome" id="R-HSA-5690714">
    <property type="pathway name" value="CD22 mediated BCR regulation"/>
</dbReference>
<dbReference type="Reactome" id="R-HSA-9664323">
    <property type="pathway name" value="FCGR3A-mediated IL10 synthesis"/>
</dbReference>
<dbReference type="Reactome" id="R-HSA-9664422">
    <property type="pathway name" value="FCGR3A-mediated phagocytosis"/>
</dbReference>
<dbReference type="Reactome" id="R-HSA-9679191">
    <property type="pathway name" value="Potential therapeutics for SARS"/>
</dbReference>
<dbReference type="Reactome" id="R-HSA-977606">
    <property type="pathway name" value="Regulation of Complement cascade"/>
</dbReference>
<dbReference type="Reactome" id="R-HSA-983695">
    <property type="pathway name" value="Antigen activates B Cell Receptor (BCR) leading to generation of second messengers"/>
</dbReference>
<dbReference type="ChiTaRS" id="IGHV4-59">
    <property type="organism name" value="human"/>
</dbReference>
<dbReference type="EvolutionaryTrace" id="P01825"/>
<dbReference type="Pharos" id="P01825">
    <property type="development level" value="Tdark"/>
</dbReference>
<dbReference type="PRO" id="PR:P01825"/>
<dbReference type="Proteomes" id="UP000005640">
    <property type="component" value="Chromosome 14"/>
</dbReference>
<dbReference type="RNAct" id="P01825">
    <property type="molecule type" value="protein"/>
</dbReference>
<dbReference type="Bgee" id="ENSG00000224373">
    <property type="expression patterns" value="Expressed in rectum and 93 other cell types or tissues"/>
</dbReference>
<dbReference type="GO" id="GO:0005576">
    <property type="term" value="C:extracellular region"/>
    <property type="evidence" value="ECO:0000304"/>
    <property type="project" value="Reactome"/>
</dbReference>
<dbReference type="GO" id="GO:0019814">
    <property type="term" value="C:immunoglobulin complex"/>
    <property type="evidence" value="ECO:0007669"/>
    <property type="project" value="UniProtKB-KW"/>
</dbReference>
<dbReference type="GO" id="GO:0005886">
    <property type="term" value="C:plasma membrane"/>
    <property type="evidence" value="ECO:0000304"/>
    <property type="project" value="Reactome"/>
</dbReference>
<dbReference type="GO" id="GO:0003823">
    <property type="term" value="F:antigen binding"/>
    <property type="evidence" value="ECO:0000318"/>
    <property type="project" value="GO_Central"/>
</dbReference>
<dbReference type="GO" id="GO:0006955">
    <property type="term" value="P:immune response"/>
    <property type="evidence" value="ECO:0000303"/>
    <property type="project" value="UniProtKB"/>
</dbReference>
<dbReference type="GO" id="GO:0016064">
    <property type="term" value="P:immunoglobulin mediated immune response"/>
    <property type="evidence" value="ECO:0000318"/>
    <property type="project" value="GO_Central"/>
</dbReference>
<dbReference type="FunFam" id="2.60.40.10:FF:001119">
    <property type="entry name" value="Immunoglobulin heavy variable 4-30-4"/>
    <property type="match status" value="1"/>
</dbReference>
<dbReference type="Gene3D" id="2.60.40.10">
    <property type="entry name" value="Immunoglobulins"/>
    <property type="match status" value="1"/>
</dbReference>
<dbReference type="InterPro" id="IPR007110">
    <property type="entry name" value="Ig-like_dom"/>
</dbReference>
<dbReference type="InterPro" id="IPR036179">
    <property type="entry name" value="Ig-like_dom_sf"/>
</dbReference>
<dbReference type="InterPro" id="IPR013783">
    <property type="entry name" value="Ig-like_fold"/>
</dbReference>
<dbReference type="InterPro" id="IPR013106">
    <property type="entry name" value="Ig_V-set"/>
</dbReference>
<dbReference type="InterPro" id="IPR050199">
    <property type="entry name" value="IgHV"/>
</dbReference>
<dbReference type="PANTHER" id="PTHR23266">
    <property type="entry name" value="IMMUNOGLOBULIN HEAVY CHAIN"/>
    <property type="match status" value="1"/>
</dbReference>
<dbReference type="Pfam" id="PF07686">
    <property type="entry name" value="V-set"/>
    <property type="match status" value="1"/>
</dbReference>
<dbReference type="SMART" id="SM00406">
    <property type="entry name" value="IGv"/>
    <property type="match status" value="1"/>
</dbReference>
<dbReference type="SUPFAM" id="SSF48726">
    <property type="entry name" value="Immunoglobulin"/>
    <property type="match status" value="1"/>
</dbReference>
<dbReference type="PROSITE" id="PS50835">
    <property type="entry name" value="IG_LIKE"/>
    <property type="match status" value="1"/>
</dbReference>
<comment type="function">
    <text evidence="5 6 7 8">V region of the variable domain of immunoglobulin heavy chains that participates in the antigen recognition (PubMed:24600447). Immunoglobulins, also known as antibodies, are membrane-bound or secreted glycoproteins produced by B lymphocytes. In the recognition phase of humoral immunity, the membrane-bound immunoglobulins serve as receptors which, upon binding of a specific antigen, trigger the clonal expansion and differentiation of B lymphocytes into immunoglobulins-secreting plasma cells. Secreted immunoglobulins mediate the effector phase of humoral immunity, which results in the elimination of bound antigens (PubMed:20176268, PubMed:22158414). The antigen binding site is formed by the variable domain of one heavy chain, together with that of its associated light chain. Thus, each immunoglobulin has two antigen binding sites with remarkable affinity for a particular antigen. The variable domains are assembled by a process called V-(D)-J rearrangement and can then be subjected to somatic hypermutations which, after exposure to antigen and selection, allow affinity maturation for a particular antigen (PubMed:17576170, PubMed:20176268).</text>
</comment>
<comment type="subunit">
    <text evidence="6">Immunoglobulins are composed of two identical heavy chains and two identical light chains; disulfide-linked.</text>
</comment>
<comment type="subcellular location">
    <subcellularLocation>
        <location evidence="6 7">Secreted</location>
    </subcellularLocation>
    <subcellularLocation>
        <location evidence="6 7">Cell membrane</location>
    </subcellularLocation>
</comment>
<comment type="polymorphism">
    <text evidence="10">There are several alleles. The sequence shown is that of IMGT allele IGHV4-59*01.</text>
</comment>
<comment type="caution">
    <text evidence="10">For examples of full-length immunoglobulin heavy chains (of different isotypes) see AC P0DOX2, AC P0DOX3, AC P0DOX4, AC P0DOX5 and AC P0DOX6.</text>
</comment>
<name>HV459_HUMAN</name>
<reference key="1">
    <citation type="journal article" date="2003" name="Nature">
        <title>The DNA sequence and analysis of human chromosome 14.</title>
        <authorList>
            <person name="Heilig R."/>
            <person name="Eckenberg R."/>
            <person name="Petit J.-L."/>
            <person name="Fonknechten N."/>
            <person name="Da Silva C."/>
            <person name="Cattolico L."/>
            <person name="Levy M."/>
            <person name="Barbe V."/>
            <person name="De Berardinis V."/>
            <person name="Ureta-Vidal A."/>
            <person name="Pelletier E."/>
            <person name="Vico V."/>
            <person name="Anthouard V."/>
            <person name="Rowen L."/>
            <person name="Madan A."/>
            <person name="Qin S."/>
            <person name="Sun H."/>
            <person name="Du H."/>
            <person name="Pepin K."/>
            <person name="Artiguenave F."/>
            <person name="Robert C."/>
            <person name="Cruaud C."/>
            <person name="Bruels T."/>
            <person name="Jaillon O."/>
            <person name="Friedlander L."/>
            <person name="Samson G."/>
            <person name="Brottier P."/>
            <person name="Cure S."/>
            <person name="Segurens B."/>
            <person name="Aniere F."/>
            <person name="Samain S."/>
            <person name="Crespeau H."/>
            <person name="Abbasi N."/>
            <person name="Aiach N."/>
            <person name="Boscus D."/>
            <person name="Dickhoff R."/>
            <person name="Dors M."/>
            <person name="Dubois I."/>
            <person name="Friedman C."/>
            <person name="Gouyvenoux M."/>
            <person name="James R."/>
            <person name="Madan A."/>
            <person name="Mairey-Estrada B."/>
            <person name="Mangenot S."/>
            <person name="Martins N."/>
            <person name="Menard M."/>
            <person name="Oztas S."/>
            <person name="Ratcliffe A."/>
            <person name="Shaffer T."/>
            <person name="Trask B."/>
            <person name="Vacherie B."/>
            <person name="Bellemere C."/>
            <person name="Belser C."/>
            <person name="Besnard-Gonnet M."/>
            <person name="Bartol-Mavel D."/>
            <person name="Boutard M."/>
            <person name="Briez-Silla S."/>
            <person name="Combette S."/>
            <person name="Dufosse-Laurent V."/>
            <person name="Ferron C."/>
            <person name="Lechaplais C."/>
            <person name="Louesse C."/>
            <person name="Muselet D."/>
            <person name="Magdelenat G."/>
            <person name="Pateau E."/>
            <person name="Petit E."/>
            <person name="Sirvain-Trukniewicz P."/>
            <person name="Trybou A."/>
            <person name="Vega-Czarny N."/>
            <person name="Bataille E."/>
            <person name="Bluet E."/>
            <person name="Bordelais I."/>
            <person name="Dubois M."/>
            <person name="Dumont C."/>
            <person name="Guerin T."/>
            <person name="Haffray S."/>
            <person name="Hammadi R."/>
            <person name="Muanga J."/>
            <person name="Pellouin V."/>
            <person name="Robert D."/>
            <person name="Wunderle E."/>
            <person name="Gauguet G."/>
            <person name="Roy A."/>
            <person name="Sainte-Marthe L."/>
            <person name="Verdier J."/>
            <person name="Verdier-Discala C."/>
            <person name="Hillier L.W."/>
            <person name="Fulton L."/>
            <person name="McPherson J."/>
            <person name="Matsuda F."/>
            <person name="Wilson R."/>
            <person name="Scarpelli C."/>
            <person name="Gyapay G."/>
            <person name="Wincker P."/>
            <person name="Saurin W."/>
            <person name="Quetier F."/>
            <person name="Waterston R."/>
            <person name="Hood L."/>
            <person name="Weissenbach J."/>
        </authorList>
    </citation>
    <scope>NUCLEOTIDE SEQUENCE [LARGE SCALE GENOMIC DNA] (IMGT ALLELE IGHV4-59*01)</scope>
</reference>
<reference key="2">
    <citation type="journal article" date="1977" name="Biochemistry">
        <title>Amino acid sequence of the VH region of a human myeloma immunoglobulin (IgG New).</title>
        <authorList>
            <person name="Poljak R.J."/>
            <person name="Nakashima Y."/>
            <person name="Chen B.L."/>
            <person name="Konigsberg W."/>
        </authorList>
    </citation>
    <scope>PROTEIN SEQUENCE OF 20-116</scope>
    <scope>PYROGLUTAMATE FORMATION AT GLN-20</scope>
</reference>
<reference key="3">
    <citation type="journal article" date="2001" name="Exp. Clin. Immunogenet.">
        <title>Nomenclature of the human immunoglobulin heavy (IGH) genes.</title>
        <authorList>
            <person name="Lefranc M.P."/>
        </authorList>
    </citation>
    <scope>NOMENCLATURE</scope>
</reference>
<reference key="4">
    <citation type="book" date="2001" name="The Immunoglobulin FactsBook.">
        <title>The Immunoglobulin FactsBook.</title>
        <editorList>
            <person name="Lefranc M.P."/>
            <person name="Lefranc G."/>
        </editorList>
        <authorList>
            <person name="Lefranc M.P."/>
            <person name="Lefranc G."/>
        </authorList>
    </citation>
    <scope>NOMENCLATURE</scope>
</reference>
<reference key="5">
    <citation type="journal article" date="2007" name="Annu. Rev. Genet.">
        <title>Immunoglobulin somatic hypermutation.</title>
        <authorList>
            <person name="Teng G."/>
            <person name="Papavasiliou F.N."/>
        </authorList>
    </citation>
    <scope>REVIEW ON SOMATIC HYPERMUTATION</scope>
</reference>
<reference key="6">
    <citation type="journal article" date="2010" name="J. Allergy Clin. Immunol.">
        <title>Structure and function of immunoglobulins.</title>
        <authorList>
            <person name="Schroeder H.W. Jr."/>
            <person name="Cavacini L."/>
        </authorList>
    </citation>
    <scope>REVIEW ON IMMUNOGLOBULINS</scope>
</reference>
<reference key="7">
    <citation type="journal article" date="2012" name="Nat. Rev. Immunol.">
        <title>Molecular programming of B cell memory.</title>
        <authorList>
            <person name="McHeyzer-Williams M."/>
            <person name="Okitsu S."/>
            <person name="Wang N."/>
            <person name="McHeyzer-Williams L."/>
        </authorList>
    </citation>
    <scope>REVIEW ON FUNCTION</scope>
</reference>
<reference key="8">
    <citation type="journal article" date="2014" name="Front. Immunol.">
        <title>Immunoglobulin and T Cell Receptor Genes: IMGT((R)) and the Birth and Rise of Immunoinformatics.</title>
        <authorList>
            <person name="Lefranc M.P."/>
        </authorList>
    </citation>
    <scope>NOMENCLATURE</scope>
</reference>
<reference key="9">
    <citation type="journal article" date="1978" name="J. Biol. Chem.">
        <title>Preliminary refinement and structural analysis of the Fab fragment from human immunoglobulin new at 2.0-A resolution.</title>
        <authorList>
            <person name="Saul F.A."/>
            <person name="Amzel L.M."/>
            <person name="Poljak R.J."/>
        </authorList>
    </citation>
    <scope>X-RAY CRYSTALLOGRAPHY (2.0 ANGSTROMS) OF FAB FRAGMENT</scope>
</reference>
<proteinExistence type="evidence at protein level"/>
<keyword id="KW-0002">3D-structure</keyword>
<keyword id="KW-1064">Adaptive immunity</keyword>
<keyword id="KW-1003">Cell membrane</keyword>
<keyword id="KW-0903">Direct protein sequencing</keyword>
<keyword id="KW-1015">Disulfide bond</keyword>
<keyword id="KW-0391">Immunity</keyword>
<keyword id="KW-1280">Immunoglobulin</keyword>
<keyword id="KW-0393">Immunoglobulin domain</keyword>
<keyword id="KW-0472">Membrane</keyword>
<keyword id="KW-1267">Proteomics identification</keyword>
<keyword id="KW-0873">Pyrrolidone carboxylic acid</keyword>
<keyword id="KW-1185">Reference proteome</keyword>
<keyword id="KW-0964">Secreted</keyword>
<keyword id="KW-0732">Signal</keyword>
<feature type="signal peptide" evidence="3">
    <location>
        <begin position="1"/>
        <end position="19"/>
    </location>
</feature>
<feature type="chain" id="PRO_0000059913" description="Immunoglobulin heavy variable 4-59" evidence="3">
    <location>
        <begin position="20"/>
        <end position="116"/>
    </location>
</feature>
<feature type="domain" description="Ig-like" evidence="2">
    <location>
        <begin position="20"/>
        <end position="116" status="greater than"/>
    </location>
</feature>
<feature type="region of interest" description="Framework-1" evidence="1">
    <location>
        <begin position="20"/>
        <end position="44"/>
    </location>
</feature>
<feature type="region of interest" description="Complementarity-determining-1" evidence="1">
    <location>
        <begin position="45"/>
        <end position="52"/>
    </location>
</feature>
<feature type="region of interest" description="Framework-2" evidence="1">
    <location>
        <begin position="53"/>
        <end position="69"/>
    </location>
</feature>
<feature type="region of interest" description="Complementarity-determining-2" evidence="1">
    <location>
        <begin position="70"/>
        <end position="76"/>
    </location>
</feature>
<feature type="region of interest" description="Framework-3" evidence="1">
    <location>
        <begin position="77"/>
        <end position="114"/>
    </location>
</feature>
<feature type="region of interest" description="Complementarity-determining-3" evidence="1">
    <location>
        <begin position="115"/>
        <end position="116" status="greater than"/>
    </location>
</feature>
<feature type="modified residue" description="Pyrrolidone carboxylic acid" evidence="3">
    <location>
        <position position="20"/>
    </location>
</feature>
<feature type="disulfide bond" evidence="2">
    <location>
        <begin position="41"/>
        <end position="114"/>
    </location>
</feature>
<feature type="sequence conflict" description="In Ref. 2; AA sequence." evidence="10" ref="2">
    <original>QE</original>
    <variation>EQ</variation>
    <location>
        <begin position="24"/>
        <end position="25"/>
    </location>
</feature>
<feature type="sequence conflict" description="In Ref. 2; AA sequence." evidence="10" ref="2">
    <original>K</original>
    <variation>R</variation>
    <location>
        <position position="32"/>
    </location>
</feature>
<feature type="sequence conflict" description="In Ref. 2; AA sequence." evidence="10" ref="2">
    <original>E</original>
    <variation>Q</variation>
    <location>
        <position position="35"/>
    </location>
</feature>
<feature type="sequence conflict" description="In Ref. 2; AA sequence." evidence="10" ref="2">
    <original>GSISSYYWSWI</original>
    <variation>STFSNDYYTWV</variation>
    <location>
        <begin position="46"/>
        <end position="56"/>
    </location>
</feature>
<feature type="sequence conflict" description="In Ref. 2; AA sequence." evidence="10" ref="2">
    <original>K</original>
    <variation>R</variation>
    <location>
        <position position="62"/>
    </location>
</feature>
<feature type="sequence conflict" description="In Ref. 2; AA sequence." evidence="10" ref="2">
    <original>IYYSGSTNYNPSLK</original>
    <variation>VFYHGTSDDTTPLR</variation>
    <location>
        <begin position="70"/>
        <end position="83"/>
    </location>
</feature>
<feature type="sequence conflict" description="In Ref. 2; AA sequence." evidence="10" ref="2">
    <original>IS</original>
    <variation>ML</variation>
    <location>
        <begin position="88"/>
        <end position="89"/>
    </location>
</feature>
<feature type="sequence conflict" description="In Ref. 2; AA sequence." evidence="10" ref="2">
    <original>K</original>
    <variation>R</variation>
    <location>
        <position position="100"/>
    </location>
</feature>
<feature type="non-terminal residue">
    <location>
        <position position="116"/>
    </location>
</feature>
<feature type="strand" evidence="13">
    <location>
        <begin position="22"/>
        <end position="26"/>
    </location>
</feature>
<feature type="strand" evidence="13">
    <location>
        <begin position="29"/>
        <end position="31"/>
    </location>
</feature>
<feature type="strand" evidence="13">
    <location>
        <begin position="37"/>
        <end position="46"/>
    </location>
</feature>
<feature type="strand" evidence="13">
    <location>
        <begin position="51"/>
        <end position="58"/>
    </location>
</feature>
<feature type="strand" evidence="13">
    <location>
        <begin position="65"/>
        <end position="70"/>
    </location>
</feature>
<feature type="strand" evidence="12">
    <location>
        <begin position="72"/>
        <end position="74"/>
    </location>
</feature>
<feature type="strand" evidence="13">
    <location>
        <begin position="76"/>
        <end position="78"/>
    </location>
</feature>
<feature type="helix" evidence="13">
    <location>
        <begin position="80"/>
        <end position="82"/>
    </location>
</feature>
<feature type="turn" evidence="13">
    <location>
        <begin position="83"/>
        <end position="85"/>
    </location>
</feature>
<feature type="strand" evidence="13">
    <location>
        <begin position="86"/>
        <end position="91"/>
    </location>
</feature>
<feature type="turn" evidence="13">
    <location>
        <begin position="92"/>
        <end position="95"/>
    </location>
</feature>
<feature type="strand" evidence="13">
    <location>
        <begin position="96"/>
        <end position="101"/>
    </location>
</feature>
<feature type="helix" evidence="13">
    <location>
        <begin position="106"/>
        <end position="108"/>
    </location>
</feature>
<feature type="strand" evidence="13">
    <location>
        <begin position="110"/>
        <end position="116"/>
    </location>
</feature>
<gene>
    <name evidence="4 9" type="primary">IGHV4-59</name>
</gene>
<evidence type="ECO:0000250" key="1">
    <source>
        <dbReference type="UniProtKB" id="P23083"/>
    </source>
</evidence>
<evidence type="ECO:0000255" key="2">
    <source>
        <dbReference type="PROSITE-ProRule" id="PRU00114"/>
    </source>
</evidence>
<evidence type="ECO:0000269" key="3">
    <source>
    </source>
</evidence>
<evidence type="ECO:0000303" key="4">
    <source>
    </source>
</evidence>
<evidence type="ECO:0000303" key="5">
    <source>
    </source>
</evidence>
<evidence type="ECO:0000303" key="6">
    <source>
    </source>
</evidence>
<evidence type="ECO:0000303" key="7">
    <source>
    </source>
</evidence>
<evidence type="ECO:0000303" key="8">
    <source>
    </source>
</evidence>
<evidence type="ECO:0000303" key="9">
    <source ref="4"/>
</evidence>
<evidence type="ECO:0000305" key="10"/>
<evidence type="ECO:0000305" key="11">
    <source>
    </source>
</evidence>
<evidence type="ECO:0007829" key="12">
    <source>
        <dbReference type="PDB" id="7CZP"/>
    </source>
</evidence>
<evidence type="ECO:0007829" key="13">
    <source>
        <dbReference type="PDB" id="7FAB"/>
    </source>
</evidence>
<accession>P01825</accession>
<accession>A0A0C4DH40</accession>
<accession>A0A0G2JPU1</accession>